<reference key="1">
    <citation type="journal article" date="2005" name="Nucleic Acids Res.">
        <title>Genome dynamics and diversity of Shigella species, the etiologic agents of bacillary dysentery.</title>
        <authorList>
            <person name="Yang F."/>
            <person name="Yang J."/>
            <person name="Zhang X."/>
            <person name="Chen L."/>
            <person name="Jiang Y."/>
            <person name="Yan Y."/>
            <person name="Tang X."/>
            <person name="Wang J."/>
            <person name="Xiong Z."/>
            <person name="Dong J."/>
            <person name="Xue Y."/>
            <person name="Zhu Y."/>
            <person name="Xu X."/>
            <person name="Sun L."/>
            <person name="Chen S."/>
            <person name="Nie H."/>
            <person name="Peng J."/>
            <person name="Xu J."/>
            <person name="Wang Y."/>
            <person name="Yuan Z."/>
            <person name="Wen Y."/>
            <person name="Yao Z."/>
            <person name="Shen Y."/>
            <person name="Qiang B."/>
            <person name="Hou Y."/>
            <person name="Yu J."/>
            <person name="Jin Q."/>
        </authorList>
    </citation>
    <scope>NUCLEOTIDE SEQUENCE [LARGE SCALE GENOMIC DNA]</scope>
    <source>
        <strain>Sd197</strain>
    </source>
</reference>
<accession>Q32E32</accession>
<name>IHFB_SHIDS</name>
<protein>
    <recommendedName>
        <fullName evidence="1">Integration host factor subunit beta</fullName>
        <shortName evidence="1">IHF-beta</shortName>
    </recommendedName>
</protein>
<keyword id="KW-0233">DNA recombination</keyword>
<keyword id="KW-0238">DNA-binding</keyword>
<keyword id="KW-1185">Reference proteome</keyword>
<keyword id="KW-0804">Transcription</keyword>
<keyword id="KW-0805">Transcription regulation</keyword>
<keyword id="KW-0810">Translation regulation</keyword>
<gene>
    <name evidence="1" type="primary">ihfB</name>
    <name evidence="1" type="synonym">himD</name>
    <name type="ordered locus">SDY_2346</name>
</gene>
<sequence length="94" mass="10651">MTKSELIERLATQQSHIPAKTVEDAVKEMLEHMASTLAQGERIEIRGFGSFSLHYRAPRTGRNPKTGDKVELEGKYVPHFKPGKELRDRANIYG</sequence>
<dbReference type="EMBL" id="CP000034">
    <property type="protein sequence ID" value="ABB62423.1"/>
    <property type="molecule type" value="Genomic_DNA"/>
</dbReference>
<dbReference type="RefSeq" id="WP_000167336.1">
    <property type="nucleotide sequence ID" value="NC_007606.1"/>
</dbReference>
<dbReference type="RefSeq" id="YP_403914.1">
    <property type="nucleotide sequence ID" value="NC_007606.1"/>
</dbReference>
<dbReference type="SMR" id="Q32E32"/>
<dbReference type="STRING" id="300267.SDY_2346"/>
<dbReference type="EnsemblBacteria" id="ABB62423">
    <property type="protein sequence ID" value="ABB62423"/>
    <property type="gene ID" value="SDY_2346"/>
</dbReference>
<dbReference type="GeneID" id="93776505"/>
<dbReference type="KEGG" id="sdy:SDY_2346"/>
<dbReference type="PATRIC" id="fig|300267.13.peg.2830"/>
<dbReference type="HOGENOM" id="CLU_105066_2_0_6"/>
<dbReference type="Proteomes" id="UP000002716">
    <property type="component" value="Chromosome"/>
</dbReference>
<dbReference type="GO" id="GO:0005694">
    <property type="term" value="C:chromosome"/>
    <property type="evidence" value="ECO:0007669"/>
    <property type="project" value="InterPro"/>
</dbReference>
<dbReference type="GO" id="GO:0005829">
    <property type="term" value="C:cytosol"/>
    <property type="evidence" value="ECO:0007669"/>
    <property type="project" value="TreeGrafter"/>
</dbReference>
<dbReference type="GO" id="GO:0003677">
    <property type="term" value="F:DNA binding"/>
    <property type="evidence" value="ECO:0007669"/>
    <property type="project" value="UniProtKB-UniRule"/>
</dbReference>
<dbReference type="GO" id="GO:0030527">
    <property type="term" value="F:structural constituent of chromatin"/>
    <property type="evidence" value="ECO:0007669"/>
    <property type="project" value="InterPro"/>
</dbReference>
<dbReference type="GO" id="GO:0006310">
    <property type="term" value="P:DNA recombination"/>
    <property type="evidence" value="ECO:0007669"/>
    <property type="project" value="UniProtKB-UniRule"/>
</dbReference>
<dbReference type="GO" id="GO:0006355">
    <property type="term" value="P:regulation of DNA-templated transcription"/>
    <property type="evidence" value="ECO:0007669"/>
    <property type="project" value="UniProtKB-UniRule"/>
</dbReference>
<dbReference type="GO" id="GO:0006417">
    <property type="term" value="P:regulation of translation"/>
    <property type="evidence" value="ECO:0007669"/>
    <property type="project" value="UniProtKB-UniRule"/>
</dbReference>
<dbReference type="CDD" id="cd13836">
    <property type="entry name" value="IHF_B"/>
    <property type="match status" value="1"/>
</dbReference>
<dbReference type="FunFam" id="4.10.520.10:FF:000003">
    <property type="entry name" value="Integration host factor subunit beta"/>
    <property type="match status" value="1"/>
</dbReference>
<dbReference type="Gene3D" id="4.10.520.10">
    <property type="entry name" value="IHF-like DNA-binding proteins"/>
    <property type="match status" value="1"/>
</dbReference>
<dbReference type="HAMAP" id="MF_00381">
    <property type="entry name" value="IHF_beta"/>
    <property type="match status" value="1"/>
</dbReference>
<dbReference type="InterPro" id="IPR000119">
    <property type="entry name" value="Hist_DNA-bd"/>
</dbReference>
<dbReference type="InterPro" id="IPR020816">
    <property type="entry name" value="Histone-like_DNA-bd_CS"/>
</dbReference>
<dbReference type="InterPro" id="IPR010992">
    <property type="entry name" value="IHF-like_DNA-bd_dom_sf"/>
</dbReference>
<dbReference type="InterPro" id="IPR005685">
    <property type="entry name" value="IHF_beta"/>
</dbReference>
<dbReference type="NCBIfam" id="TIGR00988">
    <property type="entry name" value="hip"/>
    <property type="match status" value="1"/>
</dbReference>
<dbReference type="NCBIfam" id="NF001222">
    <property type="entry name" value="PRK00199.1"/>
    <property type="match status" value="1"/>
</dbReference>
<dbReference type="PANTHER" id="PTHR33175">
    <property type="entry name" value="DNA-BINDING PROTEIN HU"/>
    <property type="match status" value="1"/>
</dbReference>
<dbReference type="PANTHER" id="PTHR33175:SF5">
    <property type="entry name" value="INTEGRATION HOST FACTOR SUBUNIT BETA"/>
    <property type="match status" value="1"/>
</dbReference>
<dbReference type="Pfam" id="PF00216">
    <property type="entry name" value="Bac_DNA_binding"/>
    <property type="match status" value="1"/>
</dbReference>
<dbReference type="PRINTS" id="PR01727">
    <property type="entry name" value="DNABINDINGHU"/>
</dbReference>
<dbReference type="SMART" id="SM00411">
    <property type="entry name" value="BHL"/>
    <property type="match status" value="1"/>
</dbReference>
<dbReference type="SUPFAM" id="SSF47729">
    <property type="entry name" value="IHF-like DNA-binding proteins"/>
    <property type="match status" value="1"/>
</dbReference>
<dbReference type="PROSITE" id="PS00045">
    <property type="entry name" value="HISTONE_LIKE"/>
    <property type="match status" value="1"/>
</dbReference>
<proteinExistence type="inferred from homology"/>
<feature type="chain" id="PRO_1000060666" description="Integration host factor subunit beta">
    <location>
        <begin position="1"/>
        <end position="94"/>
    </location>
</feature>
<evidence type="ECO:0000255" key="1">
    <source>
        <dbReference type="HAMAP-Rule" id="MF_00381"/>
    </source>
</evidence>
<comment type="function">
    <text evidence="1">This protein is one of the two subunits of integration host factor, a specific DNA-binding protein that functions in genetic recombination as well as in transcriptional and translational control.</text>
</comment>
<comment type="subunit">
    <text evidence="1">Heterodimer of an alpha and a beta chain.</text>
</comment>
<comment type="similarity">
    <text evidence="1">Belongs to the bacterial histone-like protein family.</text>
</comment>
<organism>
    <name type="scientific">Shigella dysenteriae serotype 1 (strain Sd197)</name>
    <dbReference type="NCBI Taxonomy" id="300267"/>
    <lineage>
        <taxon>Bacteria</taxon>
        <taxon>Pseudomonadati</taxon>
        <taxon>Pseudomonadota</taxon>
        <taxon>Gammaproteobacteria</taxon>
        <taxon>Enterobacterales</taxon>
        <taxon>Enterobacteriaceae</taxon>
        <taxon>Shigella</taxon>
    </lineage>
</organism>